<feature type="chain" id="PRO_0000256302" description="Chorismate synthase">
    <location>
        <begin position="1"/>
        <end position="361"/>
    </location>
</feature>
<feature type="binding site" evidence="1">
    <location>
        <position position="48"/>
    </location>
    <ligand>
        <name>NADP(+)</name>
        <dbReference type="ChEBI" id="CHEBI:58349"/>
    </ligand>
</feature>
<feature type="binding site" evidence="1">
    <location>
        <position position="54"/>
    </location>
    <ligand>
        <name>NADP(+)</name>
        <dbReference type="ChEBI" id="CHEBI:58349"/>
    </ligand>
</feature>
<feature type="binding site" evidence="1">
    <location>
        <begin position="125"/>
        <end position="127"/>
    </location>
    <ligand>
        <name>FMN</name>
        <dbReference type="ChEBI" id="CHEBI:58210"/>
    </ligand>
</feature>
<feature type="binding site" evidence="1">
    <location>
        <begin position="238"/>
        <end position="239"/>
    </location>
    <ligand>
        <name>FMN</name>
        <dbReference type="ChEBI" id="CHEBI:58210"/>
    </ligand>
</feature>
<feature type="binding site" evidence="1">
    <location>
        <position position="278"/>
    </location>
    <ligand>
        <name>FMN</name>
        <dbReference type="ChEBI" id="CHEBI:58210"/>
    </ligand>
</feature>
<feature type="binding site" evidence="1">
    <location>
        <begin position="293"/>
        <end position="297"/>
    </location>
    <ligand>
        <name>FMN</name>
        <dbReference type="ChEBI" id="CHEBI:58210"/>
    </ligand>
</feature>
<feature type="binding site" evidence="1">
    <location>
        <position position="319"/>
    </location>
    <ligand>
        <name>FMN</name>
        <dbReference type="ChEBI" id="CHEBI:58210"/>
    </ligand>
</feature>
<protein>
    <recommendedName>
        <fullName evidence="1">Chorismate synthase</fullName>
        <shortName evidence="1">CS</shortName>
        <ecNumber evidence="1">4.2.3.5</ecNumber>
    </recommendedName>
    <alternativeName>
        <fullName evidence="1">5-enolpyruvylshikimate-3-phosphate phospholyase</fullName>
    </alternativeName>
</protein>
<proteinExistence type="inferred from homology"/>
<keyword id="KW-0028">Amino-acid biosynthesis</keyword>
<keyword id="KW-0057">Aromatic amino acid biosynthesis</keyword>
<keyword id="KW-0274">FAD</keyword>
<keyword id="KW-0285">Flavoprotein</keyword>
<keyword id="KW-0288">FMN</keyword>
<keyword id="KW-0456">Lyase</keyword>
<keyword id="KW-0521">NADP</keyword>
<keyword id="KW-1185">Reference proteome</keyword>
<name>AROC_METFK</name>
<reference key="1">
    <citation type="submission" date="2006-03" db="EMBL/GenBank/DDBJ databases">
        <title>Complete sequence of Methylobacillus flagellatus KT.</title>
        <authorList>
            <consortium name="US DOE Joint Genome Institute"/>
            <person name="Copeland A."/>
            <person name="Lucas S."/>
            <person name="Lapidus A."/>
            <person name="Barry K."/>
            <person name="Detter J.C."/>
            <person name="Glavina del Rio T."/>
            <person name="Hammon N."/>
            <person name="Israni S."/>
            <person name="Dalin E."/>
            <person name="Tice H."/>
            <person name="Pitluck S."/>
            <person name="Brettin T."/>
            <person name="Bruce D."/>
            <person name="Han C."/>
            <person name="Tapia R."/>
            <person name="Saunders E."/>
            <person name="Gilna P."/>
            <person name="Schmutz J."/>
            <person name="Larimer F."/>
            <person name="Land M."/>
            <person name="Kyrpides N."/>
            <person name="Anderson I."/>
            <person name="Richardson P."/>
        </authorList>
    </citation>
    <scope>NUCLEOTIDE SEQUENCE [LARGE SCALE GENOMIC DNA]</scope>
    <source>
        <strain>ATCC 51484 / DSM 6875 / VKM B-1610 / KT</strain>
    </source>
</reference>
<accession>Q1GZD3</accession>
<dbReference type="EC" id="4.2.3.5" evidence="1"/>
<dbReference type="EMBL" id="CP000284">
    <property type="protein sequence ID" value="ABE50404.1"/>
    <property type="molecule type" value="Genomic_DNA"/>
</dbReference>
<dbReference type="RefSeq" id="WP_011480358.1">
    <property type="nucleotide sequence ID" value="NC_007947.1"/>
</dbReference>
<dbReference type="SMR" id="Q1GZD3"/>
<dbReference type="STRING" id="265072.Mfla_2137"/>
<dbReference type="KEGG" id="mfa:Mfla_2137"/>
<dbReference type="eggNOG" id="COG0082">
    <property type="taxonomic scope" value="Bacteria"/>
</dbReference>
<dbReference type="HOGENOM" id="CLU_034547_0_2_4"/>
<dbReference type="OrthoDB" id="9771806at2"/>
<dbReference type="UniPathway" id="UPA00053">
    <property type="reaction ID" value="UER00090"/>
</dbReference>
<dbReference type="Proteomes" id="UP000002440">
    <property type="component" value="Chromosome"/>
</dbReference>
<dbReference type="GO" id="GO:0005829">
    <property type="term" value="C:cytosol"/>
    <property type="evidence" value="ECO:0007669"/>
    <property type="project" value="TreeGrafter"/>
</dbReference>
<dbReference type="GO" id="GO:0004107">
    <property type="term" value="F:chorismate synthase activity"/>
    <property type="evidence" value="ECO:0007669"/>
    <property type="project" value="UniProtKB-UniRule"/>
</dbReference>
<dbReference type="GO" id="GO:0010181">
    <property type="term" value="F:FMN binding"/>
    <property type="evidence" value="ECO:0007669"/>
    <property type="project" value="TreeGrafter"/>
</dbReference>
<dbReference type="GO" id="GO:0008652">
    <property type="term" value="P:amino acid biosynthetic process"/>
    <property type="evidence" value="ECO:0007669"/>
    <property type="project" value="UniProtKB-KW"/>
</dbReference>
<dbReference type="GO" id="GO:0009073">
    <property type="term" value="P:aromatic amino acid family biosynthetic process"/>
    <property type="evidence" value="ECO:0007669"/>
    <property type="project" value="UniProtKB-KW"/>
</dbReference>
<dbReference type="GO" id="GO:0009423">
    <property type="term" value="P:chorismate biosynthetic process"/>
    <property type="evidence" value="ECO:0007669"/>
    <property type="project" value="UniProtKB-UniRule"/>
</dbReference>
<dbReference type="CDD" id="cd07304">
    <property type="entry name" value="Chorismate_synthase"/>
    <property type="match status" value="1"/>
</dbReference>
<dbReference type="FunFam" id="3.60.150.10:FF:000001">
    <property type="entry name" value="Chorismate synthase"/>
    <property type="match status" value="1"/>
</dbReference>
<dbReference type="Gene3D" id="3.60.150.10">
    <property type="entry name" value="Chorismate synthase AroC"/>
    <property type="match status" value="1"/>
</dbReference>
<dbReference type="HAMAP" id="MF_00300">
    <property type="entry name" value="Chorismate_synth"/>
    <property type="match status" value="1"/>
</dbReference>
<dbReference type="InterPro" id="IPR000453">
    <property type="entry name" value="Chorismate_synth"/>
</dbReference>
<dbReference type="InterPro" id="IPR035904">
    <property type="entry name" value="Chorismate_synth_AroC_sf"/>
</dbReference>
<dbReference type="InterPro" id="IPR020541">
    <property type="entry name" value="Chorismate_synthase_CS"/>
</dbReference>
<dbReference type="NCBIfam" id="TIGR00033">
    <property type="entry name" value="aroC"/>
    <property type="match status" value="1"/>
</dbReference>
<dbReference type="NCBIfam" id="NF003793">
    <property type="entry name" value="PRK05382.1"/>
    <property type="match status" value="1"/>
</dbReference>
<dbReference type="PANTHER" id="PTHR21085">
    <property type="entry name" value="CHORISMATE SYNTHASE"/>
    <property type="match status" value="1"/>
</dbReference>
<dbReference type="PANTHER" id="PTHR21085:SF0">
    <property type="entry name" value="CHORISMATE SYNTHASE"/>
    <property type="match status" value="1"/>
</dbReference>
<dbReference type="Pfam" id="PF01264">
    <property type="entry name" value="Chorismate_synt"/>
    <property type="match status" value="1"/>
</dbReference>
<dbReference type="PIRSF" id="PIRSF001456">
    <property type="entry name" value="Chorismate_synth"/>
    <property type="match status" value="1"/>
</dbReference>
<dbReference type="SUPFAM" id="SSF103263">
    <property type="entry name" value="Chorismate synthase, AroC"/>
    <property type="match status" value="1"/>
</dbReference>
<dbReference type="PROSITE" id="PS00787">
    <property type="entry name" value="CHORISMATE_SYNTHASE_1"/>
    <property type="match status" value="1"/>
</dbReference>
<dbReference type="PROSITE" id="PS00788">
    <property type="entry name" value="CHORISMATE_SYNTHASE_2"/>
    <property type="match status" value="1"/>
</dbReference>
<dbReference type="PROSITE" id="PS00789">
    <property type="entry name" value="CHORISMATE_SYNTHASE_3"/>
    <property type="match status" value="1"/>
</dbReference>
<gene>
    <name evidence="1" type="primary">aroC</name>
    <name type="ordered locus">Mfla_2137</name>
</gene>
<sequence length="361" mass="38951">MSGNTIGTLFTLTSFGESHGPAIGGVVDGCPPGLELSVEDIQQELDRRKPGTSRHVTQRKEPDTVEILSGVFEGRTTGTPIGLLIRNQDQRSQDYGKIAETFRPGHADYTYWQKYGIRDYRGGGRSSARETAVRVAAGAIAKKWLKQRYGVTIRGCMSQLGDIQIPFESWDAVSRNAFFAPNETILPELEAYLDRIRSERDSVGAKITVVAEGVPVGWGEPVYDRLDADIAHAMMGINAAKGVEIGDGFASVAQRGSVHGDELTPQGFASNHAGGILGGISSGQDIIAHVAFKPTSSIPQLRHSIDKHGAALEMQTTGRHDPCVGVRATPIVEAMMALVLMDHALRHRAQNADVSVDTVKR</sequence>
<evidence type="ECO:0000255" key="1">
    <source>
        <dbReference type="HAMAP-Rule" id="MF_00300"/>
    </source>
</evidence>
<comment type="function">
    <text evidence="1">Catalyzes the anti-1,4-elimination of the C-3 phosphate and the C-6 proR hydrogen from 5-enolpyruvylshikimate-3-phosphate (EPSP) to yield chorismate, which is the branch point compound that serves as the starting substrate for the three terminal pathways of aromatic amino acid biosynthesis. This reaction introduces a second double bond into the aromatic ring system.</text>
</comment>
<comment type="catalytic activity">
    <reaction evidence="1">
        <text>5-O-(1-carboxyvinyl)-3-phosphoshikimate = chorismate + phosphate</text>
        <dbReference type="Rhea" id="RHEA:21020"/>
        <dbReference type="ChEBI" id="CHEBI:29748"/>
        <dbReference type="ChEBI" id="CHEBI:43474"/>
        <dbReference type="ChEBI" id="CHEBI:57701"/>
        <dbReference type="EC" id="4.2.3.5"/>
    </reaction>
</comment>
<comment type="cofactor">
    <cofactor evidence="1">
        <name>FMNH2</name>
        <dbReference type="ChEBI" id="CHEBI:57618"/>
    </cofactor>
    <text evidence="1">Reduced FMN (FMNH(2)).</text>
</comment>
<comment type="pathway">
    <text evidence="1">Metabolic intermediate biosynthesis; chorismate biosynthesis; chorismate from D-erythrose 4-phosphate and phosphoenolpyruvate: step 7/7.</text>
</comment>
<comment type="subunit">
    <text evidence="1">Homotetramer.</text>
</comment>
<comment type="similarity">
    <text evidence="1">Belongs to the chorismate synthase family.</text>
</comment>
<organism>
    <name type="scientific">Methylobacillus flagellatus (strain ATCC 51484 / DSM 6875 / VKM B-1610 / KT)</name>
    <dbReference type="NCBI Taxonomy" id="265072"/>
    <lineage>
        <taxon>Bacteria</taxon>
        <taxon>Pseudomonadati</taxon>
        <taxon>Pseudomonadota</taxon>
        <taxon>Betaproteobacteria</taxon>
        <taxon>Nitrosomonadales</taxon>
        <taxon>Methylophilaceae</taxon>
        <taxon>Methylobacillus</taxon>
    </lineage>
</organism>